<proteinExistence type="evidence at protein level"/>
<sequence>MLKLEMMLVVLLILPLFYFDAGGQVVQRDWRSDGLARYLQRGDRDVRECNINTPGSSWGKCCLTRMCGPMCCARSGCTCVYHWRRGHGCSCPG</sequence>
<organism>
    <name type="scientific">Conus mustelinus</name>
    <name type="common">Weasel cone</name>
    <dbReference type="NCBI Taxonomy" id="101309"/>
    <lineage>
        <taxon>Eukaryota</taxon>
        <taxon>Metazoa</taxon>
        <taxon>Spiralia</taxon>
        <taxon>Lophotrochozoa</taxon>
        <taxon>Mollusca</taxon>
        <taxon>Gastropoda</taxon>
        <taxon>Caenogastropoda</taxon>
        <taxon>Neogastropoda</taxon>
        <taxon>Conoidea</taxon>
        <taxon>Conidae</taxon>
        <taxon>Conus</taxon>
        <taxon>Rhizoconus</taxon>
    </lineage>
</organism>
<feature type="signal peptide" evidence="5">
    <location>
        <begin position="1"/>
        <end position="23"/>
    </location>
</feature>
<feature type="propeptide" id="PRO_5000467220" evidence="5">
    <location>
        <begin position="24"/>
        <end position="45"/>
    </location>
</feature>
<feature type="chain" id="PRO_5000467221" description="Alpha-conotoxin-like Ms20.1">
    <location>
        <begin position="46"/>
        <end position="93"/>
    </location>
</feature>
<feature type="modified residue" description="4-carboxyglutamate" evidence="1">
    <location>
        <position position="48"/>
    </location>
</feature>
<feature type="modified residue" description="4-hydroxyproline" evidence="1">
    <location>
        <position position="54"/>
    </location>
</feature>
<feature type="disulfide bond" description="Interchain (with C-63)" evidence="2">
    <location>
        <position position="49"/>
    </location>
</feature>
<feature type="disulfide bond" description="Interchain (with C-51)" evidence="2">
    <location>
        <position position="61"/>
    </location>
</feature>
<feature type="disulfide bond" evidence="2">
    <location>
        <begin position="62"/>
        <end position="71"/>
    </location>
</feature>
<feature type="disulfide bond" evidence="2">
    <location>
        <begin position="67"/>
        <end position="79"/>
    </location>
</feature>
<feature type="disulfide bond" evidence="2">
    <location>
        <begin position="72"/>
        <end position="89"/>
    </location>
</feature>
<feature type="disulfide bond" evidence="2">
    <location>
        <begin position="77"/>
        <end position="91"/>
    </location>
</feature>
<feature type="sequence variant">
    <original>L</original>
    <variation>P</variation>
    <location>
        <position position="2"/>
    </location>
</feature>
<comment type="function">
    <text evidence="4">Alpha-conotoxins act on postsynaptic membranes, they bind to the nicotinic acetylcholine receptors (nAChR) and thus inhibit them. Through its two C-terminal domains, this homodimeric protein would bind to two nAChR allosteric sites, located outside the nAChR C-loop of the principal binding face and at the adjacent binding interface in a clockwise direction. This toxin specifically blocks mammalian neuronal nAChR of the alpha-7/CHRNA7, alpha-3-beta-2/CHRNA3-CHRNB2 and alpha-4-beta-2/CHRNA4-CHRNB2 subtypes.</text>
</comment>
<comment type="subunit">
    <text evidence="3 6">Hetero-, homo- or pseudo-homodimer (identical sequence, different post-translational modifications) (By similarity). Heterodimer of [carboxyGlu-48, hydroxyPro-54]Ms20.1 and [carboxy'Glu-50', hydroxy'Pro-56']Ms20.4 may exist.</text>
</comment>
<comment type="subcellular location">
    <subcellularLocation>
        <location>Secreted</location>
    </subcellularLocation>
</comment>
<comment type="tissue specificity">
    <text>Expressed by the venom duct.</text>
</comment>
<comment type="domain">
    <text>The cysteine framework is XX (C-CC-C-CC-C-C-C-C).</text>
</comment>
<comment type="domain">
    <text evidence="4">Displays a mini-granulin fold, a structure composed of two short, stacked beta-hairpins connected by two parallel disulfide bonds. This newly described fold is derived from the same cysteine connectivity as knottins (ICK fold). The name 'mini-granulin fold' comes from the structural homology with the N-terminal region of the human granulin.</text>
</comment>
<comment type="similarity">
    <text evidence="7">Belongs to the conotoxin D superfamily.</text>
</comment>
<protein>
    <recommendedName>
        <fullName>Alpha-conotoxin-like Ms20.1</fullName>
    </recommendedName>
    <alternativeName>
        <fullName>MsXXA</fullName>
    </alternativeName>
</protein>
<reference key="1">
    <citation type="journal article" date="2009" name="Biochemistry">
        <title>Novel alpha D-conopeptides and their precursors identified by cDNA cloning define the D-conotoxin superfamily.</title>
        <authorList>
            <person name="Loughnan M.L."/>
            <person name="Nicke A."/>
            <person name="Lawrence N."/>
            <person name="Lewis R.J."/>
        </authorList>
    </citation>
    <scope>NUCLEOTIDE SEQUENCE [MRNA]</scope>
    <scope>IDENTIFICATION BY MASS SPECTROMETRY</scope>
    <scope>SUBUNIT</scope>
    <source>
        <tissue>Venom</tissue>
        <tissue>Venom duct</tissue>
    </source>
</reference>
<accession>C4PWC3</accession>
<evidence type="ECO:0000250" key="1"/>
<evidence type="ECO:0000250" key="2">
    <source>
        <dbReference type="UniProtKB" id="A0A0A0VBX4"/>
    </source>
</evidence>
<evidence type="ECO:0000250" key="3">
    <source>
        <dbReference type="UniProtKB" id="C3VVN5"/>
    </source>
</evidence>
<evidence type="ECO:0000250" key="4">
    <source>
        <dbReference type="UniProtKB" id="P0C1W6"/>
    </source>
</evidence>
<evidence type="ECO:0000255" key="5"/>
<evidence type="ECO:0000269" key="6">
    <source>
    </source>
</evidence>
<evidence type="ECO:0000305" key="7"/>
<keyword id="KW-0008">Acetylcholine receptor inhibiting toxin</keyword>
<keyword id="KW-1015">Disulfide bond</keyword>
<keyword id="KW-0301">Gamma-carboxyglutamic acid</keyword>
<keyword id="KW-0379">Hydroxylation</keyword>
<keyword id="KW-0872">Ion channel impairing toxin</keyword>
<keyword id="KW-0528">Neurotoxin</keyword>
<keyword id="KW-0629">Postsynaptic neurotoxin</keyword>
<keyword id="KW-0964">Secreted</keyword>
<keyword id="KW-0732">Signal</keyword>
<keyword id="KW-0800">Toxin</keyword>
<name>CXAT1_CONMS</name>
<dbReference type="EMBL" id="FN178635">
    <property type="protein sequence ID" value="CAX51121.1"/>
    <property type="molecule type" value="mRNA"/>
</dbReference>
<dbReference type="SMR" id="C4PWC3"/>
<dbReference type="ConoServer" id="3596">
    <property type="toxin name" value="Ms20.1 precursor"/>
</dbReference>
<dbReference type="GO" id="GO:0005576">
    <property type="term" value="C:extracellular region"/>
    <property type="evidence" value="ECO:0007669"/>
    <property type="project" value="UniProtKB-SubCell"/>
</dbReference>
<dbReference type="GO" id="GO:0035792">
    <property type="term" value="C:host cell postsynaptic membrane"/>
    <property type="evidence" value="ECO:0007669"/>
    <property type="project" value="UniProtKB-KW"/>
</dbReference>
<dbReference type="GO" id="GO:0030550">
    <property type="term" value="F:acetylcholine receptor inhibitor activity"/>
    <property type="evidence" value="ECO:0007669"/>
    <property type="project" value="UniProtKB-KW"/>
</dbReference>
<dbReference type="GO" id="GO:0099106">
    <property type="term" value="F:ion channel regulator activity"/>
    <property type="evidence" value="ECO:0007669"/>
    <property type="project" value="UniProtKB-KW"/>
</dbReference>
<dbReference type="GO" id="GO:0090729">
    <property type="term" value="F:toxin activity"/>
    <property type="evidence" value="ECO:0007669"/>
    <property type="project" value="UniProtKB-KW"/>
</dbReference>